<organism>
    <name type="scientific">Desulfitobacterium hafniense (strain Y51)</name>
    <dbReference type="NCBI Taxonomy" id="138119"/>
    <lineage>
        <taxon>Bacteria</taxon>
        <taxon>Bacillati</taxon>
        <taxon>Bacillota</taxon>
        <taxon>Clostridia</taxon>
        <taxon>Eubacteriales</taxon>
        <taxon>Desulfitobacteriaceae</taxon>
        <taxon>Desulfitobacterium</taxon>
    </lineage>
</organism>
<gene>
    <name evidence="1" type="primary">fhs1</name>
    <name type="ordered locus">DSY0205</name>
</gene>
<sequence length="556" mass="60058">MKTDIEIAQEATMKPITEIAQGLDLLEDEIELYGKYKAKVNFSAWERLKDKPDAKLILVTAINPTPAGEGKTTTTVGLGQAMSKIGKNAMIALREPSLGPCFGVKGGAAGGGYAQVVPMEDINLHFTGDFHAITSTHNLLAALLDNHIQQGNLLNIDPRQIVFRRVMDMNDRALRKIVIGLGGRTEGIPRENGFDITVASEIMAILCLAKDLMDLKERFGRIVVAYTYDGKAITAHDLEAEGAMALLMKDAIKPNLVQTLENTPVFIHGGPFANIAHGCNSVVATRMAMKLADYVITEAGFGADLGAEKFYDLKCRFAELKPAATVIVATVRALKMNGGVAKEDLGPENLEALAKGIVNLEKHIENIGKFGVPAVVAINRFPTDTDAELEFVAERCRQLGAEFALSEVFTKGGEGGIELAKAVLNIVDNKESNFHVLYELDLPIAKKIETICKEVYGADGVNFTKEALTSMKKYEELGYGQLPICMAKTQYSLTDDQNVLGRPSGFTITVRELRLSAGAGFLVAITGAIMTMPGLPKRPAALRMDIDAAGRITGLF</sequence>
<feature type="chain" id="PRO_0000293034" description="Formate--tetrahydrofolate ligase 1">
    <location>
        <begin position="1"/>
        <end position="556"/>
    </location>
</feature>
<feature type="binding site" evidence="1">
    <location>
        <begin position="65"/>
        <end position="72"/>
    </location>
    <ligand>
        <name>ATP</name>
        <dbReference type="ChEBI" id="CHEBI:30616"/>
    </ligand>
</feature>
<keyword id="KW-0067">ATP-binding</keyword>
<keyword id="KW-0436">Ligase</keyword>
<keyword id="KW-0547">Nucleotide-binding</keyword>
<keyword id="KW-0554">One-carbon metabolism</keyword>
<keyword id="KW-1185">Reference proteome</keyword>
<accession>Q251P8</accession>
<reference key="1">
    <citation type="journal article" date="2006" name="J. Bacteriol.">
        <title>Complete genome sequence of the dehalorespiring bacterium Desulfitobacterium hafniense Y51 and comparison with Dehalococcoides ethenogenes 195.</title>
        <authorList>
            <person name="Nonaka H."/>
            <person name="Keresztes G."/>
            <person name="Shinoda Y."/>
            <person name="Ikenaga Y."/>
            <person name="Abe M."/>
            <person name="Naito K."/>
            <person name="Inatomi K."/>
            <person name="Furukawa K."/>
            <person name="Inui M."/>
            <person name="Yukawa H."/>
        </authorList>
    </citation>
    <scope>NUCLEOTIDE SEQUENCE [LARGE SCALE GENOMIC DNA]</scope>
    <source>
        <strain>Y51</strain>
    </source>
</reference>
<name>FTHS1_DESHY</name>
<comment type="catalytic activity">
    <reaction evidence="1">
        <text>(6S)-5,6,7,8-tetrahydrofolate + formate + ATP = (6R)-10-formyltetrahydrofolate + ADP + phosphate</text>
        <dbReference type="Rhea" id="RHEA:20221"/>
        <dbReference type="ChEBI" id="CHEBI:15740"/>
        <dbReference type="ChEBI" id="CHEBI:30616"/>
        <dbReference type="ChEBI" id="CHEBI:43474"/>
        <dbReference type="ChEBI" id="CHEBI:57453"/>
        <dbReference type="ChEBI" id="CHEBI:195366"/>
        <dbReference type="ChEBI" id="CHEBI:456216"/>
        <dbReference type="EC" id="6.3.4.3"/>
    </reaction>
</comment>
<comment type="pathway">
    <text evidence="1">One-carbon metabolism; tetrahydrofolate interconversion.</text>
</comment>
<comment type="similarity">
    <text evidence="1">Belongs to the formate--tetrahydrofolate ligase family.</text>
</comment>
<evidence type="ECO:0000255" key="1">
    <source>
        <dbReference type="HAMAP-Rule" id="MF_01543"/>
    </source>
</evidence>
<proteinExistence type="inferred from homology"/>
<dbReference type="EC" id="6.3.4.3" evidence="1"/>
<dbReference type="EMBL" id="AP008230">
    <property type="protein sequence ID" value="BAE81994.1"/>
    <property type="molecule type" value="Genomic_DNA"/>
</dbReference>
<dbReference type="RefSeq" id="WP_005809743.1">
    <property type="nucleotide sequence ID" value="NC_007907.1"/>
</dbReference>
<dbReference type="SMR" id="Q251P8"/>
<dbReference type="STRING" id="138119.DSY0205"/>
<dbReference type="KEGG" id="dsy:DSY0205"/>
<dbReference type="eggNOG" id="COG2759">
    <property type="taxonomic scope" value="Bacteria"/>
</dbReference>
<dbReference type="HOGENOM" id="CLU_003601_3_3_9"/>
<dbReference type="UniPathway" id="UPA00193"/>
<dbReference type="Proteomes" id="UP000001946">
    <property type="component" value="Chromosome"/>
</dbReference>
<dbReference type="GO" id="GO:0005524">
    <property type="term" value="F:ATP binding"/>
    <property type="evidence" value="ECO:0007669"/>
    <property type="project" value="UniProtKB-UniRule"/>
</dbReference>
<dbReference type="GO" id="GO:0004329">
    <property type="term" value="F:formate-tetrahydrofolate ligase activity"/>
    <property type="evidence" value="ECO:0007669"/>
    <property type="project" value="UniProtKB-UniRule"/>
</dbReference>
<dbReference type="GO" id="GO:0035999">
    <property type="term" value="P:tetrahydrofolate interconversion"/>
    <property type="evidence" value="ECO:0007669"/>
    <property type="project" value="UniProtKB-UniRule"/>
</dbReference>
<dbReference type="CDD" id="cd00477">
    <property type="entry name" value="FTHFS"/>
    <property type="match status" value="1"/>
</dbReference>
<dbReference type="FunFam" id="3.30.1510.10:FF:000001">
    <property type="entry name" value="Formate--tetrahydrofolate ligase"/>
    <property type="match status" value="1"/>
</dbReference>
<dbReference type="FunFam" id="3.10.410.10:FF:000001">
    <property type="entry name" value="Putative formate--tetrahydrofolate ligase"/>
    <property type="match status" value="1"/>
</dbReference>
<dbReference type="Gene3D" id="3.30.1510.10">
    <property type="entry name" value="Domain 2, N(10)-formyltetrahydrofolate synthetase"/>
    <property type="match status" value="1"/>
</dbReference>
<dbReference type="Gene3D" id="3.10.410.10">
    <property type="entry name" value="Formyltetrahydrofolate synthetase, domain 3"/>
    <property type="match status" value="1"/>
</dbReference>
<dbReference type="Gene3D" id="3.40.50.300">
    <property type="entry name" value="P-loop containing nucleotide triphosphate hydrolases"/>
    <property type="match status" value="1"/>
</dbReference>
<dbReference type="HAMAP" id="MF_01543">
    <property type="entry name" value="FTHFS"/>
    <property type="match status" value="1"/>
</dbReference>
<dbReference type="InterPro" id="IPR000559">
    <property type="entry name" value="Formate_THF_ligase"/>
</dbReference>
<dbReference type="InterPro" id="IPR020628">
    <property type="entry name" value="Formate_THF_ligase_CS"/>
</dbReference>
<dbReference type="InterPro" id="IPR027417">
    <property type="entry name" value="P-loop_NTPase"/>
</dbReference>
<dbReference type="NCBIfam" id="NF010030">
    <property type="entry name" value="PRK13505.1"/>
    <property type="match status" value="1"/>
</dbReference>
<dbReference type="Pfam" id="PF01268">
    <property type="entry name" value="FTHFS"/>
    <property type="match status" value="1"/>
</dbReference>
<dbReference type="SUPFAM" id="SSF52540">
    <property type="entry name" value="P-loop containing nucleoside triphosphate hydrolases"/>
    <property type="match status" value="1"/>
</dbReference>
<dbReference type="PROSITE" id="PS00721">
    <property type="entry name" value="FTHFS_1"/>
    <property type="match status" value="1"/>
</dbReference>
<dbReference type="PROSITE" id="PS00722">
    <property type="entry name" value="FTHFS_2"/>
    <property type="match status" value="1"/>
</dbReference>
<protein>
    <recommendedName>
        <fullName evidence="1">Formate--tetrahydrofolate ligase 1</fullName>
        <ecNumber evidence="1">6.3.4.3</ecNumber>
    </recommendedName>
    <alternativeName>
        <fullName evidence="1">Formyltetrahydrofolate synthetase 1</fullName>
        <shortName evidence="1">FHS 1</shortName>
        <shortName evidence="1">FTHFS 1</shortName>
    </alternativeName>
</protein>